<feature type="chain" id="PRO_0000184612" description="Galactokinase">
    <location>
        <begin position="1"/>
        <end position="384"/>
    </location>
</feature>
<feature type="active site" description="Proton acceptor" evidence="1">
    <location>
        <position position="173"/>
    </location>
</feature>
<feature type="binding site" evidence="1">
    <location>
        <begin position="34"/>
        <end position="37"/>
    </location>
    <ligand>
        <name>substrate</name>
    </ligand>
</feature>
<feature type="binding site" evidence="1">
    <location>
        <begin position="123"/>
        <end position="129"/>
    </location>
    <ligand>
        <name>ATP</name>
        <dbReference type="ChEBI" id="CHEBI:30616"/>
    </ligand>
</feature>
<feature type="binding site" evidence="1">
    <location>
        <position position="129"/>
    </location>
    <ligand>
        <name>Mg(2+)</name>
        <dbReference type="ChEBI" id="CHEBI:18420"/>
    </ligand>
</feature>
<feature type="binding site" evidence="1">
    <location>
        <position position="161"/>
    </location>
    <ligand>
        <name>Mg(2+)</name>
        <dbReference type="ChEBI" id="CHEBI:18420"/>
    </ligand>
</feature>
<feature type="binding site" evidence="1">
    <location>
        <position position="222"/>
    </location>
    <ligand>
        <name>substrate</name>
    </ligand>
</feature>
<feature type="site" description="Transition state stabilizer" evidence="1">
    <location>
        <position position="28"/>
    </location>
</feature>
<feature type="sequence variant" description="In strain: RM 7004.">
    <original>D</original>
    <variation>H</variation>
    <location>
        <position position="107"/>
    </location>
</feature>
<feature type="sequence variant" description="In strain: RM 7004.">
    <original>D</original>
    <variation>N</variation>
    <location>
        <position position="145"/>
    </location>
</feature>
<feature type="sequence variant" description="In strain: RM 7004.">
    <original>A</original>
    <variation>V</variation>
    <location>
        <position position="321"/>
    </location>
</feature>
<feature type="sequence variant" description="In strain: RM 7004.">
    <original>A</original>
    <variation>T</variation>
    <location>
        <position position="331"/>
    </location>
</feature>
<feature type="sequence variant" description="In strain: RM 7004.">
    <original>S</original>
    <variation>A</variation>
    <location>
        <position position="353"/>
    </location>
</feature>
<comment type="function">
    <text evidence="1">Catalyzes the transfer of the gamma-phosphate of ATP to D-galactose to form alpha-D-galactose-1-phosphate (Gal-1-P).</text>
</comment>
<comment type="catalytic activity">
    <reaction evidence="1">
        <text>alpha-D-galactose + ATP = alpha-D-galactose 1-phosphate + ADP + H(+)</text>
        <dbReference type="Rhea" id="RHEA:13553"/>
        <dbReference type="ChEBI" id="CHEBI:15378"/>
        <dbReference type="ChEBI" id="CHEBI:28061"/>
        <dbReference type="ChEBI" id="CHEBI:30616"/>
        <dbReference type="ChEBI" id="CHEBI:58336"/>
        <dbReference type="ChEBI" id="CHEBI:456216"/>
        <dbReference type="EC" id="2.7.1.6"/>
    </reaction>
</comment>
<comment type="pathway">
    <text evidence="1">Carbohydrate metabolism; galactose metabolism.</text>
</comment>
<comment type="subcellular location">
    <subcellularLocation>
        <location evidence="1">Cytoplasm</location>
    </subcellularLocation>
</comment>
<comment type="similarity">
    <text evidence="1">Belongs to the GHMP kinase family. GalK subfamily.</text>
</comment>
<comment type="sequence caution" evidence="2">
    <conflict type="erroneous initiation">
        <sequence resource="EMBL-CDS" id="AAC22478"/>
    </conflict>
</comment>
<sequence>MTPIQNAQQIFNRQHKNLPEITVYAPGRVNIIGEHTDYNDGFVMPCAINFGTAVSGTKRDDHIWNVYAADLDETDEFSLNVEIPKSEHKWANYVRGVVKFIQERYPDFQQGANLVISGNVPLSSGLSSSAALEVAVGKFCQQLGDLPLSHTDIALNGQKAENQFVGANCGNMDQLISALGQENHLLMIDCRSLETTPTPVPQDVAVIIVNSNVPHDLVTGEYNTRRQQCEEAAKFFGVKALRDVSVEQFQKREAELTALSPLAAKRARHVVTENQRVLDAVEALKNNDLTCLGKLMEASHDSMRDDFEITVPQIDYLVELAQLVIGKSGGARMTGGGFGGCIVALAPHDKVDSVRKIIADNYEKTTGLKETFYVCTASQGVRVI</sequence>
<protein>
    <recommendedName>
        <fullName evidence="1">Galactokinase</fullName>
        <ecNumber evidence="1">2.7.1.6</ecNumber>
    </recommendedName>
    <alternativeName>
        <fullName evidence="1">Galactose kinase</fullName>
    </alternativeName>
</protein>
<keyword id="KW-0067">ATP-binding</keyword>
<keyword id="KW-0119">Carbohydrate metabolism</keyword>
<keyword id="KW-0963">Cytoplasm</keyword>
<keyword id="KW-0299">Galactose metabolism</keyword>
<keyword id="KW-0418">Kinase</keyword>
<keyword id="KW-0460">Magnesium</keyword>
<keyword id="KW-0479">Metal-binding</keyword>
<keyword id="KW-0547">Nucleotide-binding</keyword>
<keyword id="KW-1185">Reference proteome</keyword>
<keyword id="KW-0808">Transferase</keyword>
<proteinExistence type="inferred from homology"/>
<name>GAL1_HAEIN</name>
<accession>P31767</accession>
<organism>
    <name type="scientific">Haemophilus influenzae (strain ATCC 51907 / DSM 11121 / KW20 / Rd)</name>
    <dbReference type="NCBI Taxonomy" id="71421"/>
    <lineage>
        <taxon>Bacteria</taxon>
        <taxon>Pseudomonadati</taxon>
        <taxon>Pseudomonadota</taxon>
        <taxon>Gammaproteobacteria</taxon>
        <taxon>Pasteurellales</taxon>
        <taxon>Pasteurellaceae</taxon>
        <taxon>Haemophilus</taxon>
    </lineage>
</organism>
<evidence type="ECO:0000255" key="1">
    <source>
        <dbReference type="HAMAP-Rule" id="MF_00246"/>
    </source>
</evidence>
<evidence type="ECO:0000305" key="2"/>
<gene>
    <name evidence="1" type="primary">galK</name>
    <name type="ordered locus">HI_0819</name>
</gene>
<dbReference type="EC" id="2.7.1.6" evidence="1"/>
<dbReference type="EMBL" id="X65934">
    <property type="protein sequence ID" value="CAA46731.1"/>
    <property type="molecule type" value="Genomic_DNA"/>
</dbReference>
<dbReference type="EMBL" id="L42023">
    <property type="protein sequence ID" value="AAC22478.1"/>
    <property type="status" value="ALT_INIT"/>
    <property type="molecule type" value="Genomic_DNA"/>
</dbReference>
<dbReference type="PIR" id="D64096">
    <property type="entry name" value="D64096"/>
</dbReference>
<dbReference type="RefSeq" id="NP_438979.2">
    <property type="nucleotide sequence ID" value="NC_000907.1"/>
</dbReference>
<dbReference type="SMR" id="P31767"/>
<dbReference type="STRING" id="71421.HI_0819"/>
<dbReference type="EnsemblBacteria" id="AAC22478">
    <property type="protein sequence ID" value="AAC22478"/>
    <property type="gene ID" value="HI_0819"/>
</dbReference>
<dbReference type="KEGG" id="hin:HI_0819"/>
<dbReference type="PATRIC" id="fig|71421.8.peg.860"/>
<dbReference type="eggNOG" id="COG0153">
    <property type="taxonomic scope" value="Bacteria"/>
</dbReference>
<dbReference type="HOGENOM" id="CLU_017814_2_1_6"/>
<dbReference type="OrthoDB" id="250531at2"/>
<dbReference type="PhylomeDB" id="P31767"/>
<dbReference type="BioCyc" id="HINF71421:G1GJ1-860-MONOMER"/>
<dbReference type="UniPathway" id="UPA00214"/>
<dbReference type="Proteomes" id="UP000000579">
    <property type="component" value="Chromosome"/>
</dbReference>
<dbReference type="GO" id="GO:0005829">
    <property type="term" value="C:cytosol"/>
    <property type="evidence" value="ECO:0000318"/>
    <property type="project" value="GO_Central"/>
</dbReference>
<dbReference type="GO" id="GO:0005524">
    <property type="term" value="F:ATP binding"/>
    <property type="evidence" value="ECO:0007669"/>
    <property type="project" value="UniProtKB-UniRule"/>
</dbReference>
<dbReference type="GO" id="GO:0004335">
    <property type="term" value="F:galactokinase activity"/>
    <property type="evidence" value="ECO:0000318"/>
    <property type="project" value="GO_Central"/>
</dbReference>
<dbReference type="GO" id="GO:0000287">
    <property type="term" value="F:magnesium ion binding"/>
    <property type="evidence" value="ECO:0007669"/>
    <property type="project" value="UniProtKB-UniRule"/>
</dbReference>
<dbReference type="GO" id="GO:0006012">
    <property type="term" value="P:galactose metabolic process"/>
    <property type="evidence" value="ECO:0000318"/>
    <property type="project" value="GO_Central"/>
</dbReference>
<dbReference type="FunFam" id="3.30.230.10:FF:000017">
    <property type="entry name" value="Galactokinase"/>
    <property type="match status" value="1"/>
</dbReference>
<dbReference type="FunFam" id="3.30.70.890:FF:000001">
    <property type="entry name" value="Galactokinase"/>
    <property type="match status" value="1"/>
</dbReference>
<dbReference type="Gene3D" id="3.30.230.10">
    <property type="match status" value="1"/>
</dbReference>
<dbReference type="Gene3D" id="3.30.70.890">
    <property type="entry name" value="GHMP kinase, C-terminal domain"/>
    <property type="match status" value="1"/>
</dbReference>
<dbReference type="HAMAP" id="MF_00246">
    <property type="entry name" value="Galactokinase"/>
    <property type="match status" value="1"/>
</dbReference>
<dbReference type="InterPro" id="IPR000705">
    <property type="entry name" value="Galactokinase"/>
</dbReference>
<dbReference type="InterPro" id="IPR022963">
    <property type="entry name" value="Galactokinase_bac"/>
</dbReference>
<dbReference type="InterPro" id="IPR019741">
    <property type="entry name" value="Galactokinase_CS"/>
</dbReference>
<dbReference type="InterPro" id="IPR019539">
    <property type="entry name" value="GalKase_N"/>
</dbReference>
<dbReference type="InterPro" id="IPR013750">
    <property type="entry name" value="GHMP_kinase_C_dom"/>
</dbReference>
<dbReference type="InterPro" id="IPR036554">
    <property type="entry name" value="GHMP_kinase_C_sf"/>
</dbReference>
<dbReference type="InterPro" id="IPR006204">
    <property type="entry name" value="GHMP_kinase_N_dom"/>
</dbReference>
<dbReference type="InterPro" id="IPR006203">
    <property type="entry name" value="GHMP_knse_ATP-bd_CS"/>
</dbReference>
<dbReference type="InterPro" id="IPR006206">
    <property type="entry name" value="Mevalonate/galactokinase"/>
</dbReference>
<dbReference type="InterPro" id="IPR020568">
    <property type="entry name" value="Ribosomal_Su5_D2-typ_SF"/>
</dbReference>
<dbReference type="InterPro" id="IPR014721">
    <property type="entry name" value="Ribsml_uS5_D2-typ_fold_subgr"/>
</dbReference>
<dbReference type="NCBIfam" id="TIGR00131">
    <property type="entry name" value="gal_kin"/>
    <property type="match status" value="1"/>
</dbReference>
<dbReference type="NCBIfam" id="NF003472">
    <property type="entry name" value="PRK05101.1"/>
    <property type="match status" value="1"/>
</dbReference>
<dbReference type="PANTHER" id="PTHR10457:SF7">
    <property type="entry name" value="GALACTOKINASE-RELATED"/>
    <property type="match status" value="1"/>
</dbReference>
<dbReference type="PANTHER" id="PTHR10457">
    <property type="entry name" value="MEVALONATE KINASE/GALACTOKINASE"/>
    <property type="match status" value="1"/>
</dbReference>
<dbReference type="Pfam" id="PF10509">
    <property type="entry name" value="GalKase_gal_bdg"/>
    <property type="match status" value="1"/>
</dbReference>
<dbReference type="Pfam" id="PF08544">
    <property type="entry name" value="GHMP_kinases_C"/>
    <property type="match status" value="1"/>
</dbReference>
<dbReference type="Pfam" id="PF00288">
    <property type="entry name" value="GHMP_kinases_N"/>
    <property type="match status" value="1"/>
</dbReference>
<dbReference type="PIRSF" id="PIRSF000530">
    <property type="entry name" value="Galactokinase"/>
    <property type="match status" value="1"/>
</dbReference>
<dbReference type="PRINTS" id="PR00473">
    <property type="entry name" value="GALCTOKINASE"/>
</dbReference>
<dbReference type="PRINTS" id="PR00959">
    <property type="entry name" value="MEVGALKINASE"/>
</dbReference>
<dbReference type="SUPFAM" id="SSF55060">
    <property type="entry name" value="GHMP Kinase, C-terminal domain"/>
    <property type="match status" value="1"/>
</dbReference>
<dbReference type="SUPFAM" id="SSF54211">
    <property type="entry name" value="Ribosomal protein S5 domain 2-like"/>
    <property type="match status" value="1"/>
</dbReference>
<dbReference type="PROSITE" id="PS00106">
    <property type="entry name" value="GALACTOKINASE"/>
    <property type="match status" value="1"/>
</dbReference>
<dbReference type="PROSITE" id="PS00627">
    <property type="entry name" value="GHMP_KINASES_ATP"/>
    <property type="match status" value="1"/>
</dbReference>
<reference key="1">
    <citation type="journal article" date="1992" name="Mol. Microbiol.">
        <title>The gal locus from Haemophilus influenzae: cloning, sequencing and the use of gal mutants to study lipopolysaccharide.</title>
        <authorList>
            <person name="Maskell D.J."/>
            <person name="Szabo M.J."/>
            <person name="Deadman M.E."/>
            <person name="Moxon E.R."/>
        </authorList>
    </citation>
    <scope>NUCLEOTIDE SEQUENCE [GENOMIC DNA]</scope>
    <source>
        <strain>RM 7004 / Serotype B</strain>
    </source>
</reference>
<reference key="2">
    <citation type="journal article" date="1995" name="Science">
        <title>Whole-genome random sequencing and assembly of Haemophilus influenzae Rd.</title>
        <authorList>
            <person name="Fleischmann R.D."/>
            <person name="Adams M.D."/>
            <person name="White O."/>
            <person name="Clayton R.A."/>
            <person name="Kirkness E.F."/>
            <person name="Kerlavage A.R."/>
            <person name="Bult C.J."/>
            <person name="Tomb J.-F."/>
            <person name="Dougherty B.A."/>
            <person name="Merrick J.M."/>
            <person name="McKenney K."/>
            <person name="Sutton G.G."/>
            <person name="FitzHugh W."/>
            <person name="Fields C.A."/>
            <person name="Gocayne J.D."/>
            <person name="Scott J.D."/>
            <person name="Shirley R."/>
            <person name="Liu L.-I."/>
            <person name="Glodek A."/>
            <person name="Kelley J.M."/>
            <person name="Weidman J.F."/>
            <person name="Phillips C.A."/>
            <person name="Spriggs T."/>
            <person name="Hedblom E."/>
            <person name="Cotton M.D."/>
            <person name="Utterback T.R."/>
            <person name="Hanna M.C."/>
            <person name="Nguyen D.T."/>
            <person name="Saudek D.M."/>
            <person name="Brandon R.C."/>
            <person name="Fine L.D."/>
            <person name="Fritchman J.L."/>
            <person name="Fuhrmann J.L."/>
            <person name="Geoghagen N.S.M."/>
            <person name="Gnehm C.L."/>
            <person name="McDonald L.A."/>
            <person name="Small K.V."/>
            <person name="Fraser C.M."/>
            <person name="Smith H.O."/>
            <person name="Venter J.C."/>
        </authorList>
    </citation>
    <scope>NUCLEOTIDE SEQUENCE [LARGE SCALE GENOMIC DNA]</scope>
    <source>
        <strain>ATCC 51907 / DSM 11121 / KW20 / Rd</strain>
    </source>
</reference>